<feature type="chain" id="PRO_0000065937" description="Vacuolar transporter chaperone complex subunit 4">
    <location>
        <begin position="1"/>
        <end position="721"/>
    </location>
</feature>
<feature type="topological domain" description="Cytoplasmic" evidence="7">
    <location>
        <begin position="1"/>
        <end position="630"/>
    </location>
</feature>
<feature type="transmembrane region" description="Helical" evidence="2">
    <location>
        <begin position="631"/>
        <end position="651"/>
    </location>
</feature>
<feature type="transmembrane region" description="Helical" evidence="2">
    <location>
        <begin position="652"/>
        <end position="672"/>
    </location>
</feature>
<feature type="topological domain" description="Cytoplasmic" evidence="23">
    <location>
        <begin position="673"/>
        <end position="699"/>
    </location>
</feature>
<feature type="transmembrane region" description="Helical" evidence="2">
    <location>
        <begin position="700"/>
        <end position="720"/>
    </location>
</feature>
<feature type="topological domain" description="Vacuolar" evidence="23">
    <location>
        <position position="721"/>
    </location>
</feature>
<feature type="domain" description="SPX" evidence="3">
    <location>
        <begin position="1"/>
        <end position="148"/>
    </location>
</feature>
<feature type="region of interest" description="Important for inositol polyphosphate binding" evidence="25">
    <location>
        <begin position="126"/>
        <end position="133"/>
    </location>
</feature>
<feature type="region of interest" description="Disordered" evidence="4">
    <location>
        <begin position="489"/>
        <end position="512"/>
    </location>
</feature>
<feature type="active site" evidence="24">
    <location>
        <position position="458"/>
    </location>
</feature>
<feature type="binding site" evidence="10">
    <location>
        <position position="200"/>
    </location>
    <ligand>
        <name>ATP</name>
        <dbReference type="ChEBI" id="CHEBI:30616"/>
    </ligand>
</feature>
<feature type="binding site" evidence="10">
    <location>
        <position position="264"/>
    </location>
    <ligand>
        <name>ATP</name>
        <dbReference type="ChEBI" id="CHEBI:30616"/>
    </ligand>
</feature>
<feature type="binding site" evidence="10">
    <location>
        <position position="266"/>
    </location>
    <ligand>
        <name>ATP</name>
        <dbReference type="ChEBI" id="CHEBI:30616"/>
    </ligand>
</feature>
<feature type="binding site" evidence="10">
    <location>
        <position position="281"/>
    </location>
    <ligand>
        <name>ATP</name>
        <dbReference type="ChEBI" id="CHEBI:30616"/>
    </ligand>
</feature>
<feature type="binding site" evidence="10">
    <location>
        <position position="294"/>
    </location>
    <ligand>
        <name>ATP</name>
        <dbReference type="ChEBI" id="CHEBI:30616"/>
    </ligand>
</feature>
<feature type="binding site" evidence="10">
    <location>
        <position position="359"/>
    </location>
    <ligand>
        <name>ATP</name>
        <dbReference type="ChEBI" id="CHEBI:30616"/>
    </ligand>
</feature>
<feature type="binding site" evidence="10">
    <location>
        <position position="361"/>
    </location>
    <ligand>
        <name>ATP</name>
        <dbReference type="ChEBI" id="CHEBI:30616"/>
    </ligand>
</feature>
<feature type="binding site" evidence="10">
    <location>
        <position position="426"/>
    </location>
    <ligand>
        <name>Mn(2+)</name>
        <dbReference type="ChEBI" id="CHEBI:29035"/>
    </ligand>
</feature>
<feature type="site" description="Important for inositol polyphosphate binding" evidence="1">
    <location>
        <position position="22"/>
    </location>
</feature>
<feature type="site" description="Important for inositol polyphosphate binding" evidence="1">
    <location>
        <position position="26"/>
    </location>
</feature>
<feature type="cross-link" description="Glycyl lysine isopeptide (Lys-Gly) (interchain with G-Cter in ubiquitin)" evidence="36">
    <location>
        <position position="75"/>
    </location>
</feature>
<feature type="mutagenesis site" description="Decreases nucleotide binding by a factor of 2.5 and reduces catalytic activity. Decreases nucleotide binding by a factor of 20 and abolishes catalytic activity; when associated with A-266." evidence="10">
    <original>R</original>
    <variation>A</variation>
    <location>
        <position position="264"/>
    </location>
</feature>
<feature type="mutagenesis site" description="Decreases nucleotide binding by a factor of 4 and reduces catalytic activity. Decreases nucleotide binding by a factor of 20 and abolishes catalytic activity; when associated with A-264." evidence="10">
    <original>R</original>
    <variation>A</variation>
    <location>
        <position position="266"/>
    </location>
</feature>
<feature type="mutagenesis site" description="Reduces ATP turnover and polyP synthesis." evidence="10">
    <original>E</original>
    <variation>A</variation>
    <location>
        <position position="426"/>
    </location>
</feature>
<feature type="helix" evidence="40">
    <location>
        <begin position="2"/>
        <end position="8"/>
    </location>
</feature>
<feature type="helix" evidence="41">
    <location>
        <begin position="15"/>
        <end position="18"/>
    </location>
</feature>
<feature type="helix" evidence="41">
    <location>
        <begin position="22"/>
        <end position="35"/>
    </location>
</feature>
<feature type="turn" evidence="41">
    <location>
        <begin position="36"/>
        <end position="38"/>
    </location>
</feature>
<feature type="helix" evidence="41">
    <location>
        <begin position="42"/>
        <end position="89"/>
    </location>
</feature>
<feature type="strand" evidence="42">
    <location>
        <begin position="90"/>
        <end position="92"/>
    </location>
</feature>
<feature type="helix" evidence="41">
    <location>
        <begin position="96"/>
        <end position="138"/>
    </location>
</feature>
<feature type="helix" evidence="41">
    <location>
        <begin position="143"/>
        <end position="152"/>
    </location>
</feature>
<feature type="helix" evidence="41">
    <location>
        <begin position="160"/>
        <end position="175"/>
    </location>
</feature>
<feature type="turn" evidence="41">
    <location>
        <begin position="176"/>
        <end position="178"/>
    </location>
</feature>
<feature type="strand" evidence="39">
    <location>
        <begin position="195"/>
        <end position="203"/>
    </location>
</feature>
<feature type="helix" evidence="39">
    <location>
        <begin position="205"/>
        <end position="207"/>
    </location>
</feature>
<feature type="helix" evidence="39">
    <location>
        <begin position="208"/>
        <end position="216"/>
    </location>
</feature>
<feature type="strand" evidence="38">
    <location>
        <begin position="221"/>
        <end position="223"/>
    </location>
</feature>
<feature type="helix" evidence="39">
    <location>
        <begin position="232"/>
        <end position="235"/>
    </location>
</feature>
<feature type="strand" evidence="39">
    <location>
        <begin position="236"/>
        <end position="243"/>
    </location>
</feature>
<feature type="helix" evidence="39">
    <location>
        <begin position="248"/>
        <end position="254"/>
    </location>
</feature>
<feature type="strand" evidence="39">
    <location>
        <begin position="261"/>
        <end position="270"/>
    </location>
</feature>
<feature type="strand" evidence="39">
    <location>
        <begin position="275"/>
        <end position="282"/>
    </location>
</feature>
<feature type="helix" evidence="39">
    <location>
        <begin position="286"/>
        <end position="288"/>
    </location>
</feature>
<feature type="strand" evidence="39">
    <location>
        <begin position="293"/>
        <end position="300"/>
    </location>
</feature>
<feature type="helix" evidence="39">
    <location>
        <begin position="301"/>
        <end position="303"/>
    </location>
</feature>
<feature type="helix" evidence="39">
    <location>
        <begin position="304"/>
        <end position="308"/>
    </location>
</feature>
<feature type="strand" evidence="40">
    <location>
        <begin position="310"/>
        <end position="312"/>
    </location>
</feature>
<feature type="helix" evidence="39">
    <location>
        <begin position="314"/>
        <end position="323"/>
    </location>
</feature>
<feature type="helix" evidence="39">
    <location>
        <begin position="329"/>
        <end position="348"/>
    </location>
</feature>
<feature type="strand" evidence="39">
    <location>
        <begin position="352"/>
        <end position="366"/>
    </location>
</feature>
<feature type="strand" evidence="39">
    <location>
        <begin position="369"/>
        <end position="384"/>
    </location>
</feature>
<feature type="strand" evidence="43">
    <location>
        <begin position="388"/>
        <end position="390"/>
    </location>
</feature>
<feature type="turn" evidence="38">
    <location>
        <begin position="393"/>
        <end position="396"/>
    </location>
</feature>
<feature type="strand" evidence="39">
    <location>
        <begin position="397"/>
        <end position="399"/>
    </location>
</feature>
<feature type="helix" evidence="39">
    <location>
        <begin position="414"/>
        <end position="416"/>
    </location>
</feature>
<feature type="strand" evidence="39">
    <location>
        <begin position="417"/>
        <end position="419"/>
    </location>
</feature>
<feature type="strand" evidence="39">
    <location>
        <begin position="423"/>
        <end position="431"/>
    </location>
</feature>
<feature type="helix" evidence="39">
    <location>
        <begin position="439"/>
        <end position="445"/>
    </location>
</feature>
<feature type="strand" evidence="37">
    <location>
        <begin position="447"/>
        <end position="449"/>
    </location>
</feature>
<feature type="strand" evidence="40">
    <location>
        <begin position="450"/>
        <end position="452"/>
    </location>
</feature>
<feature type="helix" evidence="39">
    <location>
        <begin position="458"/>
        <end position="466"/>
    </location>
</feature>
<feature type="turn" evidence="39">
    <location>
        <begin position="467"/>
        <end position="470"/>
    </location>
</feature>
<feature type="strand" evidence="42">
    <location>
        <begin position="472"/>
        <end position="474"/>
    </location>
</feature>
<feature type="helix" evidence="42">
    <location>
        <begin position="478"/>
        <end position="480"/>
    </location>
</feature>
<feature type="helix" evidence="43">
    <location>
        <begin position="511"/>
        <end position="523"/>
    </location>
</feature>
<feature type="helix" evidence="42">
    <location>
        <begin position="623"/>
        <end position="650"/>
    </location>
</feature>
<feature type="helix" evidence="42">
    <location>
        <begin position="656"/>
        <end position="685"/>
    </location>
</feature>
<feature type="helix" evidence="42">
    <location>
        <begin position="686"/>
        <end position="688"/>
    </location>
</feature>
<feature type="helix" evidence="42">
    <location>
        <begin position="698"/>
        <end position="721"/>
    </location>
</feature>
<name>VTC4_YEAST</name>
<accession>P47075</accession>
<accession>D6VWG5</accession>
<accession>Q7Z872</accession>
<accession>Q86ZR4</accession>
<dbReference type="EC" id="2.7.4.1" evidence="10 11"/>
<dbReference type="EMBL" id="AY264259">
    <property type="protein sequence ID" value="AAP21767.1"/>
    <property type="molecule type" value="Genomic_DNA"/>
</dbReference>
<dbReference type="EMBL" id="Z49287">
    <property type="protein sequence ID" value="CAA89303.1"/>
    <property type="status" value="ALT_FRAME"/>
    <property type="molecule type" value="Genomic_DNA"/>
</dbReference>
<dbReference type="EMBL" id="AY227894">
    <property type="protein sequence ID" value="AAQ17203.1"/>
    <property type="molecule type" value="Genomic_DNA"/>
</dbReference>
<dbReference type="EMBL" id="BK006943">
    <property type="protein sequence ID" value="DAA08781.1"/>
    <property type="molecule type" value="Genomic_DNA"/>
</dbReference>
<dbReference type="PIR" id="S56783">
    <property type="entry name" value="S56783"/>
</dbReference>
<dbReference type="RefSeq" id="NP_012522.2">
    <property type="nucleotide sequence ID" value="NM_001181446.1"/>
</dbReference>
<dbReference type="PDB" id="3G3Q">
    <property type="method" value="X-ray"/>
    <property type="resolution" value="2.64 A"/>
    <property type="chains" value="A/B=189-480"/>
</dbReference>
<dbReference type="PDB" id="3G3R">
    <property type="method" value="X-ray"/>
    <property type="resolution" value="2.00 A"/>
    <property type="chains" value="A/B=189-480"/>
</dbReference>
<dbReference type="PDB" id="3G3T">
    <property type="method" value="X-ray"/>
    <property type="resolution" value="1.85 A"/>
    <property type="chains" value="A=189-480"/>
</dbReference>
<dbReference type="PDB" id="3G3U">
    <property type="method" value="X-ray"/>
    <property type="resolution" value="2.07 A"/>
    <property type="chains" value="A/B=189-480"/>
</dbReference>
<dbReference type="PDB" id="5IIG">
    <property type="method" value="X-ray"/>
    <property type="resolution" value="2.99 A"/>
    <property type="chains" value="A=2-480"/>
</dbReference>
<dbReference type="PDB" id="5IIQ">
    <property type="method" value="X-ray"/>
    <property type="resolution" value="3.03 A"/>
    <property type="chains" value="A=2-480"/>
</dbReference>
<dbReference type="PDB" id="5IIT">
    <property type="method" value="X-ray"/>
    <property type="resolution" value="2.13 A"/>
    <property type="chains" value="A/B/C/D=1-178"/>
</dbReference>
<dbReference type="PDB" id="5LNC">
    <property type="method" value="X-ray"/>
    <property type="resolution" value="3.29 A"/>
    <property type="chains" value="A/B=1-178"/>
</dbReference>
<dbReference type="PDB" id="7YTJ">
    <property type="method" value="EM"/>
    <property type="resolution" value="3.00 A"/>
    <property type="chains" value="D=2-721"/>
</dbReference>
<dbReference type="PDB" id="8I6V">
    <property type="method" value="EM"/>
    <property type="resolution" value="3.06 A"/>
    <property type="chains" value="E=1-721"/>
</dbReference>
<dbReference type="PDBsum" id="3G3Q"/>
<dbReference type="PDBsum" id="3G3R"/>
<dbReference type="PDBsum" id="3G3T"/>
<dbReference type="PDBsum" id="3G3U"/>
<dbReference type="PDBsum" id="5IIG"/>
<dbReference type="PDBsum" id="5IIQ"/>
<dbReference type="PDBsum" id="5IIT"/>
<dbReference type="PDBsum" id="5LNC"/>
<dbReference type="PDBsum" id="7YTJ"/>
<dbReference type="PDBsum" id="8I6V"/>
<dbReference type="EMDB" id="EMD-34090"/>
<dbReference type="EMDB" id="EMD-35208"/>
<dbReference type="SMR" id="P47075"/>
<dbReference type="BioGRID" id="33743">
    <property type="interactions" value="149"/>
</dbReference>
<dbReference type="ComplexPortal" id="CPX-784">
    <property type="entry name" value="Vacuolar transporter chaperone complex, VTC3 variant"/>
</dbReference>
<dbReference type="ComplexPortal" id="CPX-8568">
    <property type="entry name" value="Vacuolar transporter chaperone complex, VTC2 variant"/>
</dbReference>
<dbReference type="DIP" id="DIP-5608N"/>
<dbReference type="FunCoup" id="P47075">
    <property type="interactions" value="118"/>
</dbReference>
<dbReference type="IntAct" id="P47075">
    <property type="interactions" value="43"/>
</dbReference>
<dbReference type="MINT" id="P47075"/>
<dbReference type="STRING" id="4932.YJL012C"/>
<dbReference type="TCDB" id="4.E.1.1.3">
    <property type="family name" value="the vacuolar (acidocalcisome) polyphosphate polymerase/channel (v-pppc) family"/>
</dbReference>
<dbReference type="iPTMnet" id="P47075"/>
<dbReference type="PaxDb" id="4932-YJL012C"/>
<dbReference type="PeptideAtlas" id="P47075"/>
<dbReference type="TopDownProteomics" id="P47075"/>
<dbReference type="EnsemblFungi" id="YJL012C_mRNA">
    <property type="protein sequence ID" value="YJL012C"/>
    <property type="gene ID" value="YJL012C"/>
</dbReference>
<dbReference type="GeneID" id="853441"/>
<dbReference type="KEGG" id="sce:YJL012C"/>
<dbReference type="AGR" id="SGD:S000003549"/>
<dbReference type="SGD" id="S000003549">
    <property type="gene designation" value="VTC4"/>
</dbReference>
<dbReference type="VEuPathDB" id="FungiDB:YJL012C"/>
<dbReference type="eggNOG" id="KOG1161">
    <property type="taxonomic scope" value="Eukaryota"/>
</dbReference>
<dbReference type="GeneTree" id="ENSGT00940000176488"/>
<dbReference type="HOGENOM" id="CLU_009308_0_0_1"/>
<dbReference type="InParanoid" id="P47075"/>
<dbReference type="OMA" id="NVNAYMR"/>
<dbReference type="OrthoDB" id="6493944at2759"/>
<dbReference type="BioCyc" id="YEAST:YJL012C-MONOMER"/>
<dbReference type="BioGRID-ORCS" id="853441">
    <property type="hits" value="0 hits in 10 CRISPR screens"/>
</dbReference>
<dbReference type="EvolutionaryTrace" id="P47075"/>
<dbReference type="PRO" id="PR:P47075"/>
<dbReference type="Proteomes" id="UP000002311">
    <property type="component" value="Chromosome X"/>
</dbReference>
<dbReference type="RNAct" id="P47075">
    <property type="molecule type" value="protein"/>
</dbReference>
<dbReference type="GO" id="GO:0000421">
    <property type="term" value="C:autophagosome membrane"/>
    <property type="evidence" value="ECO:0000303"/>
    <property type="project" value="ComplexPortal"/>
</dbReference>
<dbReference type="GO" id="GO:0005938">
    <property type="term" value="C:cell cortex"/>
    <property type="evidence" value="ECO:0007669"/>
    <property type="project" value="UniProtKB-SubCell"/>
</dbReference>
<dbReference type="GO" id="GO:0071944">
    <property type="term" value="C:cell periphery"/>
    <property type="evidence" value="ECO:0007005"/>
    <property type="project" value="SGD"/>
</dbReference>
<dbReference type="GO" id="GO:0031410">
    <property type="term" value="C:cytoplasmic vesicle"/>
    <property type="evidence" value="ECO:0007669"/>
    <property type="project" value="UniProtKB-KW"/>
</dbReference>
<dbReference type="GO" id="GO:0005783">
    <property type="term" value="C:endoplasmic reticulum"/>
    <property type="evidence" value="ECO:0000314"/>
    <property type="project" value="SGD"/>
</dbReference>
<dbReference type="GO" id="GO:0005789">
    <property type="term" value="C:endoplasmic reticulum membrane"/>
    <property type="evidence" value="ECO:0007669"/>
    <property type="project" value="UniProtKB-SubCell"/>
</dbReference>
<dbReference type="GO" id="GO:0000329">
    <property type="term" value="C:fungal-type vacuole membrane"/>
    <property type="evidence" value="ECO:0007005"/>
    <property type="project" value="SGD"/>
</dbReference>
<dbReference type="GO" id="GO:0005774">
    <property type="term" value="C:vacuolar membrane"/>
    <property type="evidence" value="ECO:0000314"/>
    <property type="project" value="SGD"/>
</dbReference>
<dbReference type="GO" id="GO:0033254">
    <property type="term" value="C:vacuolar transporter chaperone complex"/>
    <property type="evidence" value="ECO:0000353"/>
    <property type="project" value="SGD"/>
</dbReference>
<dbReference type="GO" id="GO:0005516">
    <property type="term" value="F:calmodulin binding"/>
    <property type="evidence" value="ECO:0000314"/>
    <property type="project" value="SGD"/>
</dbReference>
<dbReference type="GO" id="GO:0000822">
    <property type="term" value="F:inositol hexakisphosphate binding"/>
    <property type="evidence" value="ECO:0000314"/>
    <property type="project" value="SGD"/>
</dbReference>
<dbReference type="GO" id="GO:0008976">
    <property type="term" value="F:polyphosphate kinase activity"/>
    <property type="evidence" value="ECO:0000314"/>
    <property type="project" value="SGD"/>
</dbReference>
<dbReference type="GO" id="GO:0061736">
    <property type="term" value="P:engulfment of target by autophagosome"/>
    <property type="evidence" value="ECO:0000303"/>
    <property type="project" value="ComplexPortal"/>
</dbReference>
<dbReference type="GO" id="GO:0016237">
    <property type="term" value="P:microautophagy"/>
    <property type="evidence" value="ECO:0000314"/>
    <property type="project" value="SGD"/>
</dbReference>
<dbReference type="GO" id="GO:0006799">
    <property type="term" value="P:polyphosphate biosynthetic process"/>
    <property type="evidence" value="ECO:0000314"/>
    <property type="project" value="ComplexPortal"/>
</dbReference>
<dbReference type="GO" id="GO:0006797">
    <property type="term" value="P:polyphosphate metabolic process"/>
    <property type="evidence" value="ECO:0000315"/>
    <property type="project" value="SGD"/>
</dbReference>
<dbReference type="GO" id="GO:0007034">
    <property type="term" value="P:vacuolar transport"/>
    <property type="evidence" value="ECO:0000314"/>
    <property type="project" value="SGD"/>
</dbReference>
<dbReference type="CDD" id="cd07751">
    <property type="entry name" value="PolyPPase_VTC4_like"/>
    <property type="match status" value="1"/>
</dbReference>
<dbReference type="CDD" id="cd14480">
    <property type="entry name" value="SPX_VTC2_like"/>
    <property type="match status" value="1"/>
</dbReference>
<dbReference type="FunFam" id="3.20.100.30:FF:000001">
    <property type="entry name" value="Vacuolar transporter chaperone 4"/>
    <property type="match status" value="1"/>
</dbReference>
<dbReference type="Gene3D" id="3.20.100.30">
    <property type="entry name" value="VTC, catalytic tunnel domain"/>
    <property type="match status" value="1"/>
</dbReference>
<dbReference type="InterPro" id="IPR003807">
    <property type="entry name" value="DUF202"/>
</dbReference>
<dbReference type="InterPro" id="IPR004331">
    <property type="entry name" value="SPX_dom"/>
</dbReference>
<dbReference type="InterPro" id="IPR051572">
    <property type="entry name" value="VTC_Complex_Subunit"/>
</dbReference>
<dbReference type="InterPro" id="IPR018966">
    <property type="entry name" value="VTC_domain"/>
</dbReference>
<dbReference type="InterPro" id="IPR042267">
    <property type="entry name" value="VTC_sf"/>
</dbReference>
<dbReference type="PANTHER" id="PTHR46140">
    <property type="entry name" value="VACUOLAR TRANSPORTER CHAPERONE 1-RELATED"/>
    <property type="match status" value="1"/>
</dbReference>
<dbReference type="PANTHER" id="PTHR46140:SF1">
    <property type="entry name" value="VACUOLAR TRANSPORTER CHAPERONE COMPLEX SUBUNIT 4-RELATED"/>
    <property type="match status" value="1"/>
</dbReference>
<dbReference type="Pfam" id="PF02656">
    <property type="entry name" value="DUF202"/>
    <property type="match status" value="1"/>
</dbReference>
<dbReference type="Pfam" id="PF09359">
    <property type="entry name" value="VTC"/>
    <property type="match status" value="1"/>
</dbReference>
<dbReference type="PROSITE" id="PS51382">
    <property type="entry name" value="SPX"/>
    <property type="match status" value="1"/>
</dbReference>
<comment type="function">
    <text evidence="5 6 7 9 10 12 14">Catalytic subunit of the vacuolar transporter chaperone (VTC) complex. The VTC complex acts as a vacuolar polyphosphate polymerase that catalyzes the synthesis of inorganic polyphosphate (polyP) via transfer of phosphate from ATP to a growing polyP chain, releasing ADP. VTC exposes its catalytic domain VTC4 to the cytosol, where the growing polyP chain winds through a tunnel-shaped pocket, integrating cytoplasmic polymer synthesis with polyP membrane translocation (PubMed:19390046). The VTC complex carries 9 vacuolar transmembrane domains, which are likely to constitute the translocation channel into the organelle lumen (PubMed:19390046, PubMed:25315834). PolyP synthesis is tightly coupled to its transport into the vacuole lumen, in order to avoid otherwise toxic intermediates in the cytosol, and it depends on the proton gradient across the membrane, formed by V-ATPase (PubMed:25315834). The VTC complex also plays a role in vacuolar membrane fusion (PubMed:11102525, PubMed:11823419, PubMed:12584253). Required for SEC18/NSF activity in SNARE priming, membrane binding of LMA1 and V(0) trans-complex formation (PubMed:11823419). Binds inositol hexakisphosphate (Ins6P) and similar inositol polyphosphates, such as 5-diphospho-inositol pentakisphosphate (5-InsP7); these are important intracellular signaling molecules. Inositol polyphosphate binding promotes vacuolar polyphosphate synthesis (PubMed:27080106). The VTC complex is required for microautophagy. It is a constituent of autophagic tubes and is required for scission of microautophagic vesicles from these tubes (PubMed:17079729).</text>
</comment>
<comment type="catalytic activity">
    <reaction evidence="10 11">
        <text>[phosphate](n) + ATP = [phosphate](n+1) + ADP</text>
        <dbReference type="Rhea" id="RHEA:19573"/>
        <dbReference type="Rhea" id="RHEA-COMP:9859"/>
        <dbReference type="Rhea" id="RHEA-COMP:14280"/>
        <dbReference type="ChEBI" id="CHEBI:16838"/>
        <dbReference type="ChEBI" id="CHEBI:30616"/>
        <dbReference type="ChEBI" id="CHEBI:456216"/>
        <dbReference type="EC" id="2.7.4.1"/>
    </reaction>
    <physiologicalReaction direction="left-to-right" evidence="10 11">
        <dbReference type="Rhea" id="RHEA:19574"/>
    </physiologicalReaction>
</comment>
<comment type="cofactor">
    <cofactor evidence="10">
        <name>Mn(2+)</name>
        <dbReference type="ChEBI" id="CHEBI:29035"/>
    </cofactor>
</comment>
<comment type="activity regulation">
    <text evidence="10">Activity of the enzyme is Mn(2+)-dependent and enhanced in the presence of pyrophosphate (PPi).</text>
</comment>
<comment type="biophysicochemical properties">
    <kinetics>
        <KM evidence="11">261.2 uM for ATP</KM>
        <Vmax evidence="11">145.0 umol/min/mg enzyme</Vmax>
    </kinetics>
</comment>
<comment type="subunit">
    <text evidence="6 10 15">The VTC core complex is an integral membrane heterooligomer composed of the catalytic subunit VTC4 and the accessory subunits VTC1, VTC2 and VTC3. The complex exists in 2 different sub-complexes: VTC1-VTC2-VCT4 and VCT1-VTC3-VTC4. The VCT1-VTC3-VTC4 subcomplex is mostly found on the vacuolar membrane. The VTC1-VTC2-VCT4 subcomplex is observed in the cell periphery, probably ER and nuclear envelope, but localizes to the vacuole under phosphate starvation. Each subunit contains 3 transmembrane helices. VTC1 is a small membrane protein without hydrophilic domain. VTC2, VTC3 and VTC4 are related and have 2 hydrophilic domains that face the cytosol, an N-terminal SPX domain and the central core domain. The central core in VTC4 is the catalytic domain, with the essential catalytic lysine replaced by isoleucine and leucine in VTC2 and VTC3, respectively (PubMed:19390046). The core complex associates with the accessory subunit VTC5 (PubMed:27587415). The complex interacts with the v-SNARE NYV1 and with the V(0) subunit of V-ATPase VPH1 (PubMed:11823419).</text>
</comment>
<comment type="interaction">
    <interactant intactId="EBI-25789">
        <id>P47075</id>
    </interactant>
    <interactant intactId="EBI-35523">
        <id>Q06449</id>
        <label>PIN3</label>
    </interactant>
    <organismsDiffer>false</organismsDiffer>
    <experiments>2</experiments>
</comment>
<comment type="subcellular location">
    <subcellularLocation>
        <location evidence="7 10 13">Vacuole membrane</location>
        <topology evidence="10">Multi-pass membrane protein</topology>
    </subcellularLocation>
    <subcellularLocation>
        <location evidence="9 10 13">Cytoplasm</location>
        <location evidence="9 10 13">Cell cortex</location>
    </subcellularLocation>
    <subcellularLocation>
        <location evidence="9">Endoplasmic reticulum membrane</location>
        <topology evidence="10">Multi-pass membrane protein</topology>
    </subcellularLocation>
    <subcellularLocation>
        <location evidence="9">Cytoplasmic vesicle</location>
        <location evidence="9">Autophagosome membrane</location>
        <topology evidence="10">Multi-pass membrane protein</topology>
    </subcellularLocation>
</comment>
<comment type="induction">
    <text evidence="5">By low phosphate.</text>
</comment>
<comment type="domain">
    <text evidence="25 26">The SPX domain has very high affinity for inositol polyphosphates, such as myo-inositol hexakisphosphate and 5-diphospho-myo-inositol pentakisphosphate (5-InsP7), and moderate affinity for inorganic pyrophosphate. Its affinity for inorganic phosphate is 2 to 3 orders of magnitude lower (Probable). SPX domains may integrate inositol pyrophosphates (PP-InsP)-dependent signaling to adapt cytosolic phosphate concentrations to different metabolic situations (Probable).</text>
</comment>
<comment type="disruption phenotype">
    <text evidence="16">Leads to a decrease in intracellular arginine, consistent with a role for polyP in vacuolar arginine storage.</text>
</comment>
<comment type="miscellaneous">
    <text evidence="8">Present with 8710 molecules/cell in log phase SD medium.</text>
</comment>
<comment type="similarity">
    <text evidence="22">Belongs to the VTC4 family.</text>
</comment>
<comment type="sequence caution" evidence="22">
    <conflict type="frameshift">
        <sequence resource="EMBL-CDS" id="CAA89303"/>
    </conflict>
</comment>
<protein>
    <recommendedName>
        <fullName evidence="22">Vacuolar transporter chaperone complex subunit 4</fullName>
    </recommendedName>
    <alternativeName>
        <fullName evidence="18">Phosphate metabolism protein 3</fullName>
    </alternativeName>
    <alternativeName>
        <fullName evidence="20">Polyphosphate kinase</fullName>
    </alternativeName>
    <alternativeName>
        <fullName evidence="21">SPX-dependent polyphosphate polymerase VTC subunit 4</fullName>
    </alternativeName>
    <alternativeName>
        <fullName evidence="19">Vacuolar membrane polyphosphate polymerase catalytic subunit</fullName>
        <shortName>PolyP polymerase</shortName>
        <ecNumber evidence="10 11">2.7.4.1</ecNumber>
    </alternativeName>
</protein>
<sequence length="721" mass="83155">MKFGEHLSKSLIRQYSYYYISYDDLKTELEDNLSKNNGQWTQELETDFLESLEIELDKVYTFCKVKHSEVFRRVKEVQEQVQHTVRLLDSNNPPTQLDFEILEEELSDIIADVHDLAKFSRLNYTGFQKIIKKHDKKTGFILKPVFQVRLDSKPFFKENYDELVVKISQLYDIARTSGRPIKGDSSAGGKQQNFVRQTTKYWVHPDNITELKLIILKHLPVLVFNTNKEFEREDSAITSIYFDNENLDLYYGRLRKDEGAEAHRLRWYGGMSTDTIFVERKTHREDWTGEKSVKARFALKERHVNDFLKGKYTVDQVFAKMRKEGKKPMNEIENLEALASEIQYVMLKKKLRPVVRSFYNRTAFQLPGDARVRISLDTELTMVREDNFDGVDRTHKNWRRTDIGVDWPFKQLDDKDICRFPYAVLEVKLQTQLGQEPPEWVRELVGSHLVEPVPKFSKFIHGVATLLNDKVDSIPFWLPQMDVDIRKPPLPTNIEITRPGRSDNEDNDFDEDDEDDAALVAAMTNAPGNSLDIEESVGYGATSAPTSNTNHVVESANAAYYQRKIRNAENPISKKYYEIVAFFDHYFNGDQISKIPKGTTFDTQIRAPPGKTICVPVRVEPKVYFATERTYLSWLSISILLGGVSTTLLTYGSPTAMIGSIGFFITSLAVLIRTVMVYAKRVVNIRLKRAVDYEDKIGPGMVSVFLILSILFSFFCNLVAK</sequence>
<organism>
    <name type="scientific">Saccharomyces cerevisiae (strain ATCC 204508 / S288c)</name>
    <name type="common">Baker's yeast</name>
    <dbReference type="NCBI Taxonomy" id="559292"/>
    <lineage>
        <taxon>Eukaryota</taxon>
        <taxon>Fungi</taxon>
        <taxon>Dikarya</taxon>
        <taxon>Ascomycota</taxon>
        <taxon>Saccharomycotina</taxon>
        <taxon>Saccharomycetes</taxon>
        <taxon>Saccharomycetales</taxon>
        <taxon>Saccharomycetaceae</taxon>
        <taxon>Saccharomyces</taxon>
    </lineage>
</organism>
<evidence type="ECO:0000250" key="1">
    <source>
        <dbReference type="UniProtKB" id="P43585"/>
    </source>
</evidence>
<evidence type="ECO:0000255" key="2"/>
<evidence type="ECO:0000255" key="3">
    <source>
        <dbReference type="PROSITE-ProRule" id="PRU00714"/>
    </source>
</evidence>
<evidence type="ECO:0000256" key="4">
    <source>
        <dbReference type="SAM" id="MobiDB-lite"/>
    </source>
</evidence>
<evidence type="ECO:0000269" key="5">
    <source>
    </source>
</evidence>
<evidence type="ECO:0000269" key="6">
    <source>
    </source>
</evidence>
<evidence type="ECO:0000269" key="7">
    <source>
    </source>
</evidence>
<evidence type="ECO:0000269" key="8">
    <source>
    </source>
</evidence>
<evidence type="ECO:0000269" key="9">
    <source>
    </source>
</evidence>
<evidence type="ECO:0000269" key="10">
    <source>
    </source>
</evidence>
<evidence type="ECO:0000269" key="11">
    <source>
    </source>
</evidence>
<evidence type="ECO:0000269" key="12">
    <source>
    </source>
</evidence>
<evidence type="ECO:0000269" key="13">
    <source>
    </source>
</evidence>
<evidence type="ECO:0000269" key="14">
    <source>
    </source>
</evidence>
<evidence type="ECO:0000269" key="15">
    <source>
    </source>
</evidence>
<evidence type="ECO:0000269" key="16">
    <source>
    </source>
</evidence>
<evidence type="ECO:0000303" key="17">
    <source>
    </source>
</evidence>
<evidence type="ECO:0000303" key="18">
    <source>
    </source>
</evidence>
<evidence type="ECO:0000303" key="19">
    <source>
    </source>
</evidence>
<evidence type="ECO:0000303" key="20">
    <source>
    </source>
</evidence>
<evidence type="ECO:0000303" key="21">
    <source>
    </source>
</evidence>
<evidence type="ECO:0000305" key="22"/>
<evidence type="ECO:0000305" key="23">
    <source>
    </source>
</evidence>
<evidence type="ECO:0000305" key="24">
    <source>
    </source>
</evidence>
<evidence type="ECO:0000305" key="25">
    <source>
    </source>
</evidence>
<evidence type="ECO:0000305" key="26">
    <source>
    </source>
</evidence>
<evidence type="ECO:0000312" key="27">
    <source>
        <dbReference type="SGD" id="S000003549"/>
    </source>
</evidence>
<evidence type="ECO:0007744" key="28">
    <source>
        <dbReference type="PDB" id="3G3Q"/>
    </source>
</evidence>
<evidence type="ECO:0007744" key="29">
    <source>
        <dbReference type="PDB" id="3G3R"/>
    </source>
</evidence>
<evidence type="ECO:0007744" key="30">
    <source>
        <dbReference type="PDB" id="3G3T"/>
    </source>
</evidence>
<evidence type="ECO:0007744" key="31">
    <source>
        <dbReference type="PDB" id="3G3U"/>
    </source>
</evidence>
<evidence type="ECO:0007744" key="32">
    <source>
        <dbReference type="PDB" id="5IIG"/>
    </source>
</evidence>
<evidence type="ECO:0007744" key="33">
    <source>
        <dbReference type="PDB" id="5IIQ"/>
    </source>
</evidence>
<evidence type="ECO:0007744" key="34">
    <source>
        <dbReference type="PDB" id="5IIT"/>
    </source>
</evidence>
<evidence type="ECO:0007744" key="35">
    <source>
        <dbReference type="PDB" id="5LNC"/>
    </source>
</evidence>
<evidence type="ECO:0007744" key="36">
    <source>
    </source>
</evidence>
<evidence type="ECO:0007829" key="37">
    <source>
        <dbReference type="PDB" id="3G3Q"/>
    </source>
</evidence>
<evidence type="ECO:0007829" key="38">
    <source>
        <dbReference type="PDB" id="3G3R"/>
    </source>
</evidence>
<evidence type="ECO:0007829" key="39">
    <source>
        <dbReference type="PDB" id="3G3T"/>
    </source>
</evidence>
<evidence type="ECO:0007829" key="40">
    <source>
        <dbReference type="PDB" id="5IIG"/>
    </source>
</evidence>
<evidence type="ECO:0007829" key="41">
    <source>
        <dbReference type="PDB" id="5IIT"/>
    </source>
</evidence>
<evidence type="ECO:0007829" key="42">
    <source>
        <dbReference type="PDB" id="7YTJ"/>
    </source>
</evidence>
<evidence type="ECO:0007829" key="43">
    <source>
        <dbReference type="PDB" id="8I6V"/>
    </source>
</evidence>
<keyword id="KW-0002">3D-structure</keyword>
<keyword id="KW-0963">Cytoplasm</keyword>
<keyword id="KW-0968">Cytoplasmic vesicle</keyword>
<keyword id="KW-0903">Direct protein sequencing</keyword>
<keyword id="KW-0256">Endoplasmic reticulum</keyword>
<keyword id="KW-1017">Isopeptide bond</keyword>
<keyword id="KW-0472">Membrane</keyword>
<keyword id="KW-1185">Reference proteome</keyword>
<keyword id="KW-0808">Transferase</keyword>
<keyword id="KW-0812">Transmembrane</keyword>
<keyword id="KW-1133">Transmembrane helix</keyword>
<keyword id="KW-0832">Ubl conjugation</keyword>
<keyword id="KW-0926">Vacuole</keyword>
<proteinExistence type="evidence at protein level"/>
<reference key="1">
    <citation type="journal article" date="2003" name="J. Cell Sci.">
        <title>Role of the Vtc proteins in V-ATPase stability and membrane trafficking.</title>
        <authorList>
            <person name="Mueller O."/>
            <person name="Neumann H."/>
            <person name="Bayer M.J."/>
            <person name="Mayer A."/>
        </authorList>
    </citation>
    <scope>NUCLEOTIDE SEQUENCE [GENOMIC DNA]</scope>
    <scope>FUNCTION</scope>
    <scope>TOPOLOGY</scope>
    <scope>SUBCELLULAR LOCATION</scope>
    <source>
        <strain>ATCC 204508 / S288c</strain>
    </source>
</reference>
<reference key="2">
    <citation type="journal article" date="1996" name="EMBO J.">
        <title>Complete nucleotide sequence of Saccharomyces cerevisiae chromosome X.</title>
        <authorList>
            <person name="Galibert F."/>
            <person name="Alexandraki D."/>
            <person name="Baur A."/>
            <person name="Boles E."/>
            <person name="Chalwatzis N."/>
            <person name="Chuat J.-C."/>
            <person name="Coster F."/>
            <person name="Cziepluch C."/>
            <person name="de Haan M."/>
            <person name="Domdey H."/>
            <person name="Durand P."/>
            <person name="Entian K.-D."/>
            <person name="Gatius M."/>
            <person name="Goffeau A."/>
            <person name="Grivell L.A."/>
            <person name="Hennemann A."/>
            <person name="Herbert C.J."/>
            <person name="Heumann K."/>
            <person name="Hilger F."/>
            <person name="Hollenberg C.P."/>
            <person name="Huang M.-E."/>
            <person name="Jacq C."/>
            <person name="Jauniaux J.-C."/>
            <person name="Katsoulou C."/>
            <person name="Kirchrath L."/>
            <person name="Kleine K."/>
            <person name="Kordes E."/>
            <person name="Koetter P."/>
            <person name="Liebl S."/>
            <person name="Louis E.J."/>
            <person name="Manus V."/>
            <person name="Mewes H.-W."/>
            <person name="Miosga T."/>
            <person name="Obermaier B."/>
            <person name="Perea J."/>
            <person name="Pohl T.M."/>
            <person name="Portetelle D."/>
            <person name="Pujol A."/>
            <person name="Purnelle B."/>
            <person name="Ramezani Rad M."/>
            <person name="Rasmussen S.W."/>
            <person name="Rose M."/>
            <person name="Rossau R."/>
            <person name="Schaaff-Gerstenschlaeger I."/>
            <person name="Smits P.H.M."/>
            <person name="Scarcez T."/>
            <person name="Soriano N."/>
            <person name="To Van D."/>
            <person name="Tzermia M."/>
            <person name="Van Broekhoven A."/>
            <person name="Vandenbol M."/>
            <person name="Wedler H."/>
            <person name="von Wettstein D."/>
            <person name="Wambutt R."/>
            <person name="Zagulski M."/>
            <person name="Zollner A."/>
            <person name="Karpfinger-Hartl L."/>
        </authorList>
    </citation>
    <scope>NUCLEOTIDE SEQUENCE [LARGE SCALE GENOMIC DNA]</scope>
    <source>
        <strain>ATCC 204508 / S288c</strain>
    </source>
</reference>
<reference key="3">
    <citation type="journal article" date="2014" name="G3 (Bethesda)">
        <title>The reference genome sequence of Saccharomyces cerevisiae: Then and now.</title>
        <authorList>
            <person name="Engel S.R."/>
            <person name="Dietrich F.S."/>
            <person name="Fisk D.G."/>
            <person name="Binkley G."/>
            <person name="Balakrishnan R."/>
            <person name="Costanzo M.C."/>
            <person name="Dwight S.S."/>
            <person name="Hitz B.C."/>
            <person name="Karra K."/>
            <person name="Nash R.S."/>
            <person name="Weng S."/>
            <person name="Wong E.D."/>
            <person name="Lloyd P."/>
            <person name="Skrzypek M.S."/>
            <person name="Miyasato S.R."/>
            <person name="Simison M."/>
            <person name="Cherry J.M."/>
        </authorList>
    </citation>
    <scope>GENOME REANNOTATION</scope>
    <source>
        <strain>ATCC 204508 / S288c</strain>
    </source>
</reference>
<reference key="4">
    <citation type="submission" date="2005-06" db="UniProtKB">
        <authorList>
            <person name="Bienvenut W.V."/>
            <person name="Peters C."/>
        </authorList>
    </citation>
    <scope>PROTEIN SEQUENCE OF 1-9; 74-86; 122-129; 138-149; 158-175; 201-212; 267-280; 310-320; 362-371; 374-384; 401-410; 429-455; 598-606 AND 612-622</scope>
    <scope>IDENTIFICATION BY MASS SPECTROMETRY</scope>
</reference>
<reference key="5">
    <citation type="journal article" date="2003" name="Genome Biol.">
        <title>Reinvestigation of the Saccharomyces cerevisiae genome annotation by comparison to the genome of a related fungus: Ashbya gossypii.</title>
        <authorList>
            <person name="Brachat S."/>
            <person name="Dietrich F.S."/>
            <person name="Voegeli S."/>
            <person name="Zhang Z."/>
            <person name="Stuart L."/>
            <person name="Lerch A."/>
            <person name="Gates K."/>
            <person name="Gaffney T.D."/>
            <person name="Philippsen P."/>
        </authorList>
    </citation>
    <scope>NUCLEOTIDE SEQUENCE [GENOMIC DNA] OF 577-642</scope>
    <source>
        <strain>ATCC 204511 / S288c / AB972</strain>
    </source>
</reference>
<reference key="6">
    <citation type="journal article" date="1999" name="J. Biol. Chem.">
        <title>A novel family of yeast chaperons involved in the distribution of V-ATPase and other membrane proteins.</title>
        <authorList>
            <person name="Cohen A."/>
            <person name="Perzov N."/>
            <person name="Nelson H."/>
            <person name="Nelson N."/>
        </authorList>
    </citation>
    <scope>GENE FAMILY</scope>
</reference>
<reference key="7">
    <citation type="journal article" date="2000" name="Mol. Biol. Cell">
        <title>New components of a system for phosphate accumulation and polyphosphate metabolism in Saccharomyces cerevisiae revealed by genomic expression analysis.</title>
        <authorList>
            <person name="Ogawa N."/>
            <person name="DeRisi J.L."/>
            <person name="Brown P.O."/>
        </authorList>
    </citation>
    <scope>FUNCTION</scope>
    <scope>INDUCTION</scope>
</reference>
<reference key="8">
    <citation type="journal article" date="2002" name="EMBO J.">
        <title>The Vtc proteins in vacuole fusion: coupling NSF activity to V(0) trans-complex formation.</title>
        <authorList>
            <person name="Mueller O."/>
            <person name="Bayer M.J."/>
            <person name="Peters C."/>
            <person name="Andersen J.S."/>
            <person name="Mann M."/>
            <person name="Mayer A."/>
        </authorList>
    </citation>
    <scope>FUNCTION</scope>
    <scope>IDENTIFICATION IN VTC COMPLEX</scope>
    <scope>SUBUNIT</scope>
    <scope>INTERACTION WITH NYV1 AND VPH1</scope>
</reference>
<reference key="9">
    <citation type="journal article" date="2003" name="Nature">
        <title>Global analysis of protein expression in yeast.</title>
        <authorList>
            <person name="Ghaemmaghami S."/>
            <person name="Huh W.-K."/>
            <person name="Bower K."/>
            <person name="Howson R.W."/>
            <person name="Belle A."/>
            <person name="Dephoure N."/>
            <person name="O'Shea E.K."/>
            <person name="Weissman J.S."/>
        </authorList>
    </citation>
    <scope>LEVEL OF PROTEIN EXPRESSION [LARGE SCALE ANALYSIS]</scope>
</reference>
<reference key="10">
    <citation type="journal article" date="2007" name="Mol. Biol. Cell">
        <title>The vacuolar transporter chaperone (VTC) complex is required for microautophagy.</title>
        <authorList>
            <person name="Uttenweiler A."/>
            <person name="Schwarz H."/>
            <person name="Neumann H."/>
            <person name="Mayer A."/>
        </authorList>
    </citation>
    <scope>FUNCTION</scope>
    <scope>SUBCELLULAR LOCATION</scope>
</reference>
<reference key="11">
    <citation type="journal article" date="2008" name="Mol. Cell. Proteomics">
        <title>A multidimensional chromatography technology for in-depth phosphoproteome analysis.</title>
        <authorList>
            <person name="Albuquerque C.P."/>
            <person name="Smolka M.B."/>
            <person name="Payne S.H."/>
            <person name="Bafna V."/>
            <person name="Eng J."/>
            <person name="Zhou H."/>
        </authorList>
    </citation>
    <scope>IDENTIFICATION BY MASS SPECTROMETRY [LARGE SCALE ANALYSIS]</scope>
</reference>
<reference key="12">
    <citation type="journal article" date="2012" name="Proteomics">
        <title>Sites of ubiquitin attachment in Saccharomyces cerevisiae.</title>
        <authorList>
            <person name="Starita L.M."/>
            <person name="Lo R.S."/>
            <person name="Eng J.K."/>
            <person name="von Haller P.D."/>
            <person name="Fields S."/>
        </authorList>
    </citation>
    <scope>UBIQUITINATION [LARGE SCALE ANALYSIS] AT LYS-75</scope>
    <scope>IDENTIFICATION BY MASS SPECTROMETRY [LARGE SCALE ANALYSIS]</scope>
</reference>
<reference key="13">
    <citation type="journal article" date="2013" name="J. Biol. Chem.">
        <title>Trypanosoma brucei vacuolar transporter chaperone 4 (TbVtc4) is an acidocalcisome polyphosphate kinase required for in vivo infection.</title>
        <authorList>
            <person name="Lander N."/>
            <person name="Ulrich P.N."/>
            <person name="Docampo R."/>
        </authorList>
    </citation>
    <scope>CATALYTIC ACTIVITY</scope>
    <scope>BIOPHYSICOCHEMICAL PROPERTIES</scope>
</reference>
<reference key="14">
    <citation type="journal article" date="2014" name="J. Cell Sci.">
        <title>Coupled synthesis and translocation restrains polyphosphate to acidocalcisome-like vacuoles and prevents its toxicity.</title>
        <authorList>
            <person name="Gerasimaite R."/>
            <person name="Sharma S."/>
            <person name="Desfougeres Y."/>
            <person name="Schmidt A."/>
            <person name="Mayer A."/>
        </authorList>
    </citation>
    <scope>FUNCTION</scope>
</reference>
<reference key="15">
    <citation type="journal article" date="2016" name="J. Biol. Chem.">
        <title>Vtc5, a novel subunit of the vacuolar transporter chaperone complex, regulates polyphosphate synthesis and phosphate homeostasis in yeast.</title>
        <authorList>
            <person name="Desfougeres Y."/>
            <person name="Gerasimaite R.U."/>
            <person name="Jessen H.J."/>
            <person name="Mayer A."/>
        </authorList>
    </citation>
    <scope>INTERACTION WITH VTC5</scope>
</reference>
<reference key="16">
    <citation type="journal article" date="2016" name="Nat. Methods">
        <title>One library to make them all: streamlining the creation of yeast libraries via a SWAp-Tag strategy.</title>
        <authorList>
            <person name="Yofe I."/>
            <person name="Weill U."/>
            <person name="Meurer M."/>
            <person name="Chuartzman S."/>
            <person name="Zalckvar E."/>
            <person name="Goldman O."/>
            <person name="Ben-Dor S."/>
            <person name="Schuetze C."/>
            <person name="Wiedemann N."/>
            <person name="Knop M."/>
            <person name="Khmelinskii A."/>
            <person name="Schuldiner M."/>
        </authorList>
    </citation>
    <scope>SUBCELLULAR LOCATION</scope>
</reference>
<reference key="17">
    <citation type="journal article" date="2017" name="ACS Chem. Biol.">
        <title>Inositol pyrophosphate specificity of the SPX-dependent polyphosphate polymerase VTC.</title>
        <authorList>
            <person name="Gerasimaite R."/>
            <person name="Pavlovic I."/>
            <person name="Capolicchio S."/>
            <person name="Hofer A."/>
            <person name="Schmidt A."/>
            <person name="Jessen H.J."/>
            <person name="Mayer A."/>
        </authorList>
    </citation>
    <scope>DOMAIN</scope>
</reference>
<reference evidence="28 29 30 31" key="18">
    <citation type="journal article" date="2009" name="Science">
        <title>Catalytic core of a membrane-associated eukaryotic polyphosphate polymerase.</title>
        <authorList>
            <person name="Hothorn M."/>
            <person name="Neumann H."/>
            <person name="Lenherr E.D."/>
            <person name="Wehner M."/>
            <person name="Rybin V."/>
            <person name="Hassa P.O."/>
            <person name="Uttenweiler A."/>
            <person name="Reinhardt M."/>
            <person name="Schmidt A."/>
            <person name="Seiler J."/>
            <person name="Ladurner A.G."/>
            <person name="Herrmann C."/>
            <person name="Scheffzek K."/>
            <person name="Mayer A."/>
        </authorList>
    </citation>
    <scope>X-RAY CRYSTALLOGRAPHY (1.85 ANGSTROMS) OF 189-480 IN COMPLEX WITH ATP AND PHOSPHATE</scope>
    <scope>FUNCTION</scope>
    <scope>CATALYTIC ACTIVITY</scope>
    <scope>BIOPHYSICOCHEMICAL PROPERTIES</scope>
    <scope>SUBUNIT</scope>
    <scope>SUBCELLULAR LOCATION</scope>
    <scope>MUTAGENESIS OF ARG-264; ARG-266 AND GLU-426</scope>
</reference>
<reference evidence="32 33 34" key="19">
    <citation type="journal article" date="2016" name="Science">
        <title>Control of eukaryotic phosphate homeostasis by inositol polyphosphate sensor domains.</title>
        <authorList>
            <person name="Wild R."/>
            <person name="Gerasimaite R."/>
            <person name="Jung J.Y."/>
            <person name="Truffault V."/>
            <person name="Pavlovic I."/>
            <person name="Schmidt A."/>
            <person name="Saiardi A."/>
            <person name="Jessen H.J."/>
            <person name="Poirier Y."/>
            <person name="Hothorn M."/>
            <person name="Mayer A."/>
        </authorList>
    </citation>
    <scope>X-RAY CRYSTALLOGRAPHY (2.13 ANGSTROMS) OF 1-178</scope>
    <scope>FUNCTION</scope>
    <scope>DOMAIN</scope>
</reference>
<reference evidence="35" key="20">
    <citation type="journal article" date="2017" name="Protein Sci.">
        <title>The macro domain as fusion tag for carrier-driven crystallization.</title>
        <authorList>
            <person name="Wild R."/>
            <person name="Hothorn M."/>
        </authorList>
    </citation>
    <scope>X-RAY CRYSTALLOGRAPHY (3.29 ANGSTROMS) OF 1-178</scope>
</reference>
<reference key="21">
    <citation type="journal article" date="2020" name="PLoS Genet.">
        <title>Nitrogen coordinated import and export of arginine across the yeast vacuolar membrane.</title>
        <authorList>
            <person name="Cools M."/>
            <person name="Lissoir S."/>
            <person name="Bodo E."/>
            <person name="Ulloa-Calzonzin J."/>
            <person name="DeLuna A."/>
            <person name="Georis I."/>
            <person name="Andre B."/>
        </authorList>
    </citation>
    <scope>DISRUPTION PHENOTYPE</scope>
</reference>
<gene>
    <name evidence="17" type="primary">VTC4</name>
    <name evidence="18" type="synonym">PHM3</name>
    <name evidence="27" type="ordered locus">YJL012C</name>
    <name type="ORF">J1345</name>
</gene>